<comment type="function">
    <text evidence="1 2">Involved in oxidative stress response and redox homeostasis. Functions as a sensor and transducer of hydroperoxide stress. In response to hydroperoxide stress it oxidizes (activates) the transcription activator CAP1, which is involved in transcription activation of genes of the oxidative stress response pathway (PubMed:23706023). May also play a direct role in hydroperoxide scavenging. The enzyme is not required for the glutaredoxin-mediated antioxidant function. In the presence of peroxides, GPX3 is directly oxidized at Cys-43 to form a cysteine sulfenic acid (-SOH). Cys-43-SOH then forms either an intramolecular disulfide bond (Cys-43 with Cys-89) or a transient, intermolecular disulfide bond with 'Cys-446' of CAP1, which is further resolved into a CAP1 intramolecular disulfide bond ('Cys-303' with 'Cys-598'), which causes its nuclear accumulation and activation, and a reduced Cys-43 in GPX3 (By similarity). Required for C.albicans-mediated macrophage killing (PubMed:23706023).</text>
</comment>
<comment type="catalytic activity">
    <reaction evidence="1">
        <text>a hydroperoxide + [thioredoxin]-dithiol = an alcohol + [thioredoxin]-disulfide + H2O</text>
        <dbReference type="Rhea" id="RHEA:62620"/>
        <dbReference type="Rhea" id="RHEA-COMP:10698"/>
        <dbReference type="Rhea" id="RHEA-COMP:10700"/>
        <dbReference type="ChEBI" id="CHEBI:15377"/>
        <dbReference type="ChEBI" id="CHEBI:29950"/>
        <dbReference type="ChEBI" id="CHEBI:30879"/>
        <dbReference type="ChEBI" id="CHEBI:35924"/>
        <dbReference type="ChEBI" id="CHEBI:50058"/>
        <dbReference type="EC" id="1.11.1.24"/>
    </reaction>
</comment>
<comment type="subunit">
    <text evidence="1">Interacts with CAP1 and probably YBP1.</text>
</comment>
<comment type="disruption phenotype">
    <text evidence="2">Sensitive to hydrogen peroxide. Unable to filament and thus, escape from murine macrophages after phagocytosis. Also displays defective virulence in the Galleria mellonella infection model.</text>
</comment>
<comment type="miscellaneous">
    <text evidence="1">The active site is a conserved redox-active cysteine residue, the peroxidatic cysteine (C(P)), which makes the nucleophilic attack on the peroxide substrate. The peroxide oxidizes the C(P)-SH to cysteine sulfenic acid (C(P)-SOH), which then reacts with another cysteine residue, the resolving cysteine (C(R)), to form a disulfide bridge. The disulfide is subsequently reduced by an appropriate electron donor to complete the catalytic cycle. In this atypical 2-Cys peroxiredoxin, C(R) is present in the same subunit to form an intramolecular disulfide.</text>
</comment>
<comment type="similarity">
    <text evidence="4">Belongs to the glutathione peroxidase family.</text>
</comment>
<dbReference type="EC" id="1.11.1.24" evidence="1"/>
<dbReference type="EMBL" id="CP017623">
    <property type="protein sequence ID" value="AOW26383.1"/>
    <property type="molecule type" value="Genomic_DNA"/>
</dbReference>
<dbReference type="RefSeq" id="XP_713880.1">
    <property type="nucleotide sequence ID" value="XM_708787.2"/>
</dbReference>
<dbReference type="SMR" id="Q59WD3"/>
<dbReference type="STRING" id="237561.Q59WD3"/>
<dbReference type="EnsemblFungi" id="C1_07350C_A-T">
    <property type="protein sequence ID" value="C1_07350C_A-T-p1"/>
    <property type="gene ID" value="C1_07350C_A"/>
</dbReference>
<dbReference type="GeneID" id="3644471"/>
<dbReference type="KEGG" id="cal:CAALFM_C107350CA"/>
<dbReference type="CGD" id="CAL0000190813">
    <property type="gene designation" value="GPX3"/>
</dbReference>
<dbReference type="VEuPathDB" id="FungiDB:C1_07350C_A"/>
<dbReference type="eggNOG" id="KOG1651">
    <property type="taxonomic scope" value="Eukaryota"/>
</dbReference>
<dbReference type="HOGENOM" id="CLU_029507_2_2_1"/>
<dbReference type="InParanoid" id="Q59WD3"/>
<dbReference type="OMA" id="HRYDISW"/>
<dbReference type="OrthoDB" id="446890at2759"/>
<dbReference type="PHI-base" id="PHI:3807"/>
<dbReference type="Proteomes" id="UP000000559">
    <property type="component" value="Chromosome 1"/>
</dbReference>
<dbReference type="GO" id="GO:0005737">
    <property type="term" value="C:cytoplasm"/>
    <property type="evidence" value="ECO:0000314"/>
    <property type="project" value="CGD"/>
</dbReference>
<dbReference type="GO" id="GO:0005782">
    <property type="term" value="C:peroxisomal matrix"/>
    <property type="evidence" value="ECO:0007669"/>
    <property type="project" value="EnsemblFungi"/>
</dbReference>
<dbReference type="GO" id="GO:0004602">
    <property type="term" value="F:glutathione peroxidase activity"/>
    <property type="evidence" value="ECO:0007669"/>
    <property type="project" value="EnsemblFungi"/>
</dbReference>
<dbReference type="GO" id="GO:0047066">
    <property type="term" value="F:phospholipid-hydroperoxide glutathione peroxidase activity"/>
    <property type="evidence" value="ECO:0007669"/>
    <property type="project" value="EnsemblFungi"/>
</dbReference>
<dbReference type="GO" id="GO:0140824">
    <property type="term" value="F:thioredoxin-dependent peroxiredoxin activity"/>
    <property type="evidence" value="ECO:0007669"/>
    <property type="project" value="UniProtKB-EC"/>
</dbReference>
<dbReference type="GO" id="GO:0034599">
    <property type="term" value="P:cellular response to oxidative stress"/>
    <property type="evidence" value="ECO:0000315"/>
    <property type="project" value="CGD"/>
</dbReference>
<dbReference type="GO" id="GO:0034440">
    <property type="term" value="P:lipid oxidation"/>
    <property type="evidence" value="ECO:0000315"/>
    <property type="project" value="CGD"/>
</dbReference>
<dbReference type="GO" id="GO:0007031">
    <property type="term" value="P:peroxisome organization"/>
    <property type="evidence" value="ECO:0007669"/>
    <property type="project" value="EnsemblFungi"/>
</dbReference>
<dbReference type="GO" id="GO:0045944">
    <property type="term" value="P:positive regulation of transcription by RNA polymerase II"/>
    <property type="evidence" value="ECO:0000315"/>
    <property type="project" value="CGD"/>
</dbReference>
<dbReference type="CDD" id="cd00340">
    <property type="entry name" value="GSH_Peroxidase"/>
    <property type="match status" value="1"/>
</dbReference>
<dbReference type="FunFam" id="3.40.30.10:FF:000010">
    <property type="entry name" value="Glutathione peroxidase"/>
    <property type="match status" value="1"/>
</dbReference>
<dbReference type="Gene3D" id="3.40.30.10">
    <property type="entry name" value="Glutaredoxin"/>
    <property type="match status" value="1"/>
</dbReference>
<dbReference type="InterPro" id="IPR000889">
    <property type="entry name" value="Glutathione_peroxidase"/>
</dbReference>
<dbReference type="InterPro" id="IPR029759">
    <property type="entry name" value="GPX_AS"/>
</dbReference>
<dbReference type="InterPro" id="IPR029760">
    <property type="entry name" value="GPX_CS"/>
</dbReference>
<dbReference type="InterPro" id="IPR036249">
    <property type="entry name" value="Thioredoxin-like_sf"/>
</dbReference>
<dbReference type="PANTHER" id="PTHR11592">
    <property type="entry name" value="GLUTATHIONE PEROXIDASE"/>
    <property type="match status" value="1"/>
</dbReference>
<dbReference type="PANTHER" id="PTHR11592:SF78">
    <property type="entry name" value="GLUTATHIONE PEROXIDASE"/>
    <property type="match status" value="1"/>
</dbReference>
<dbReference type="Pfam" id="PF00255">
    <property type="entry name" value="GSHPx"/>
    <property type="match status" value="1"/>
</dbReference>
<dbReference type="PIRSF" id="PIRSF000303">
    <property type="entry name" value="Glutathion_perox"/>
    <property type="match status" value="1"/>
</dbReference>
<dbReference type="PRINTS" id="PR01011">
    <property type="entry name" value="GLUTPROXDASE"/>
</dbReference>
<dbReference type="SUPFAM" id="SSF52833">
    <property type="entry name" value="Thioredoxin-like"/>
    <property type="match status" value="1"/>
</dbReference>
<dbReference type="PROSITE" id="PS00460">
    <property type="entry name" value="GLUTATHIONE_PEROXID_1"/>
    <property type="match status" value="1"/>
</dbReference>
<dbReference type="PROSITE" id="PS00763">
    <property type="entry name" value="GLUTATHIONE_PEROXID_2"/>
    <property type="match status" value="1"/>
</dbReference>
<dbReference type="PROSITE" id="PS51355">
    <property type="entry name" value="GLUTATHIONE_PEROXID_3"/>
    <property type="match status" value="1"/>
</dbReference>
<keyword id="KW-0049">Antioxidant</keyword>
<keyword id="KW-1015">Disulfide bond</keyword>
<keyword id="KW-0560">Oxidoreductase</keyword>
<keyword id="KW-0575">Peroxidase</keyword>
<keyword id="KW-0676">Redox-active center</keyword>
<keyword id="KW-1185">Reference proteome</keyword>
<evidence type="ECO:0000250" key="1">
    <source>
        <dbReference type="UniProtKB" id="P40581"/>
    </source>
</evidence>
<evidence type="ECO:0000269" key="2">
    <source>
    </source>
</evidence>
<evidence type="ECO:0000303" key="3">
    <source>
    </source>
</evidence>
<evidence type="ECO:0000305" key="4"/>
<sequence length="171" mass="19842">MGNELLSTARIYTFKIPDAYNNVIDFDQFKNKVILIVNVASLCGFTPQYKELQLLYEKYHERGLEILGFPCNQFGNQEPLQEEEIVESCRRNFGVSFPIMKKTKVNIDCDGHESELYKYLKSEKPGEVGFKGVRWNFEKFIVNRKGEVVARFNSLITPLQLEGFIEQLLSE</sequence>
<organism>
    <name type="scientific">Candida albicans (strain SC5314 / ATCC MYA-2876)</name>
    <name type="common">Yeast</name>
    <dbReference type="NCBI Taxonomy" id="237561"/>
    <lineage>
        <taxon>Eukaryota</taxon>
        <taxon>Fungi</taxon>
        <taxon>Dikarya</taxon>
        <taxon>Ascomycota</taxon>
        <taxon>Saccharomycotina</taxon>
        <taxon>Pichiomycetes</taxon>
        <taxon>Debaryomycetaceae</taxon>
        <taxon>Candida/Lodderomyces clade</taxon>
        <taxon>Candida</taxon>
    </lineage>
</organism>
<name>GPX3_CANAL</name>
<reference key="1">
    <citation type="journal article" date="2004" name="Proc. Natl. Acad. Sci. U.S.A.">
        <title>The diploid genome sequence of Candida albicans.</title>
        <authorList>
            <person name="Jones T."/>
            <person name="Federspiel N.A."/>
            <person name="Chibana H."/>
            <person name="Dungan J."/>
            <person name="Kalman S."/>
            <person name="Magee B.B."/>
            <person name="Newport G."/>
            <person name="Thorstenson Y.R."/>
            <person name="Agabian N."/>
            <person name="Magee P.T."/>
            <person name="Davis R.W."/>
            <person name="Scherer S."/>
        </authorList>
    </citation>
    <scope>NUCLEOTIDE SEQUENCE [LARGE SCALE GENOMIC DNA]</scope>
    <source>
        <strain>SC5314 / ATCC MYA-2876</strain>
    </source>
</reference>
<reference key="2">
    <citation type="journal article" date="2007" name="Genome Biol.">
        <title>Assembly of the Candida albicans genome into sixteen supercontigs aligned on the eight chromosomes.</title>
        <authorList>
            <person name="van het Hoog M."/>
            <person name="Rast T.J."/>
            <person name="Martchenko M."/>
            <person name="Grindle S."/>
            <person name="Dignard D."/>
            <person name="Hogues H."/>
            <person name="Cuomo C."/>
            <person name="Berriman M."/>
            <person name="Scherer S."/>
            <person name="Magee B.B."/>
            <person name="Whiteway M."/>
            <person name="Chibana H."/>
            <person name="Nantel A."/>
            <person name="Magee P.T."/>
        </authorList>
    </citation>
    <scope>GENOME REANNOTATION</scope>
    <source>
        <strain>SC5314 / ATCC MYA-2876</strain>
    </source>
</reference>
<reference key="3">
    <citation type="journal article" date="2013" name="Genome Biol.">
        <title>Assembly of a phased diploid Candida albicans genome facilitates allele-specific measurements and provides a simple model for repeat and indel structure.</title>
        <authorList>
            <person name="Muzzey D."/>
            <person name="Schwartz K."/>
            <person name="Weissman J.S."/>
            <person name="Sherlock G."/>
        </authorList>
    </citation>
    <scope>NUCLEOTIDE SEQUENCE [LARGE SCALE GENOMIC DNA]</scope>
    <scope>GENOME REANNOTATION</scope>
    <source>
        <strain>SC5314 / ATCC MYA-2876</strain>
    </source>
</reference>
<reference key="4">
    <citation type="journal article" date="2013" name="Antioxid. Redox Signal.">
        <title>Ybp1 and Gpx3 signaling in Candida albicans govern hydrogen peroxide-induced oxidation of the Cap1 transcription factor and macrophage escape.</title>
        <authorList>
            <person name="Patterson M.J."/>
            <person name="McKenzie C.G."/>
            <person name="Smith D.A."/>
            <person name="da Silva Dantas A."/>
            <person name="Sherston S."/>
            <person name="Veal E.A."/>
            <person name="Morgan B.A."/>
            <person name="MacCallum D.M."/>
            <person name="Erwig L.P."/>
            <person name="Quinn J."/>
        </authorList>
    </citation>
    <scope>FUNCTION</scope>
    <scope>DISRUPTION PHENOTYPE</scope>
</reference>
<gene>
    <name evidence="3" type="primary">GPX3</name>
    <name type="ordered locus">CAALFM_C107350CA</name>
    <name type="ORF">orf19.4436</name>
</gene>
<feature type="chain" id="PRO_0000441072" description="Glutathione peroxidase-like peroxiredoxin GPX3">
    <location>
        <begin position="1"/>
        <end position="171"/>
    </location>
</feature>
<feature type="active site" description="Cysteine sulfenic acid (-SOH) intermediate" evidence="1">
    <location>
        <position position="43"/>
    </location>
</feature>
<feature type="disulfide bond" description="Redox-active" evidence="1">
    <location>
        <begin position="43"/>
        <end position="89"/>
    </location>
</feature>
<feature type="disulfide bond" description="Interchain (with C-446 in CAP1); transient" evidence="1">
    <location>
        <position position="43"/>
    </location>
</feature>
<proteinExistence type="inferred from homology"/>
<protein>
    <recommendedName>
        <fullName evidence="4">Glutathione peroxidase-like peroxiredoxin GPX3</fullName>
        <ecNumber evidence="1">1.11.1.24</ecNumber>
    </recommendedName>
    <alternativeName>
        <fullName evidence="3">Glutathione peroxidase homolog 3</fullName>
        <shortName>GPx 3</shortName>
    </alternativeName>
</protein>
<accession>Q59WD3</accession>